<gene>
    <name evidence="1" type="primary">dlgD</name>
    <name type="ordered locus">ECSE_3851</name>
</gene>
<dbReference type="EC" id="1.1.1.130" evidence="1"/>
<dbReference type="EMBL" id="AP009240">
    <property type="protein sequence ID" value="BAG79375.1"/>
    <property type="molecule type" value="Genomic_DNA"/>
</dbReference>
<dbReference type="SMR" id="B6I3E8"/>
<dbReference type="KEGG" id="ecy:ECSE_3851"/>
<dbReference type="HOGENOM" id="CLU_040452_4_0_6"/>
<dbReference type="Proteomes" id="UP000008199">
    <property type="component" value="Chromosome"/>
</dbReference>
<dbReference type="GO" id="GO:0005737">
    <property type="term" value="C:cytoplasm"/>
    <property type="evidence" value="ECO:0007669"/>
    <property type="project" value="UniProtKB-SubCell"/>
</dbReference>
<dbReference type="GO" id="GO:0047559">
    <property type="term" value="F:3-dehydro-L-gulonate 2-dehydrogenase activity"/>
    <property type="evidence" value="ECO:0007669"/>
    <property type="project" value="UniProtKB-UniRule"/>
</dbReference>
<dbReference type="GO" id="GO:0070403">
    <property type="term" value="F:NAD+ binding"/>
    <property type="evidence" value="ECO:0007669"/>
    <property type="project" value="InterPro"/>
</dbReference>
<dbReference type="FunFam" id="1.10.1530.10:FF:000001">
    <property type="entry name" value="2,3-diketo-L-gulonate reductase"/>
    <property type="match status" value="1"/>
</dbReference>
<dbReference type="Gene3D" id="1.10.1530.10">
    <property type="match status" value="1"/>
</dbReference>
<dbReference type="Gene3D" id="3.30.1370.60">
    <property type="entry name" value="Hypothetical oxidoreductase yiak, domain 2"/>
    <property type="match status" value="1"/>
</dbReference>
<dbReference type="Gene3D" id="3.30.60.50">
    <property type="entry name" value="Hypothetical oxidoreductase yiak, domain 3"/>
    <property type="match status" value="1"/>
</dbReference>
<dbReference type="HAMAP" id="MF_00820">
    <property type="entry name" value="Diketo_gul_reduc"/>
    <property type="match status" value="1"/>
</dbReference>
<dbReference type="InterPro" id="IPR023689">
    <property type="entry name" value="Diketo_gul_Rdtase"/>
</dbReference>
<dbReference type="InterPro" id="IPR043144">
    <property type="entry name" value="Mal/L-sulf/L-lact_DH-like_ah"/>
</dbReference>
<dbReference type="InterPro" id="IPR043143">
    <property type="entry name" value="Mal/L-sulf/L-lact_DH-like_NADP"/>
</dbReference>
<dbReference type="InterPro" id="IPR036111">
    <property type="entry name" value="Mal/L-sulfo/L-lacto_DH-like_sf"/>
</dbReference>
<dbReference type="InterPro" id="IPR003767">
    <property type="entry name" value="Malate/L-lactate_DH-like"/>
</dbReference>
<dbReference type="NCBIfam" id="NF009750">
    <property type="entry name" value="PRK13260.1"/>
    <property type="match status" value="1"/>
</dbReference>
<dbReference type="PANTHER" id="PTHR11091:SF3">
    <property type="entry name" value="2,3-DIKETO-L-GULONATE REDUCTASE"/>
    <property type="match status" value="1"/>
</dbReference>
<dbReference type="PANTHER" id="PTHR11091">
    <property type="entry name" value="OXIDOREDUCTASE-RELATED"/>
    <property type="match status" value="1"/>
</dbReference>
<dbReference type="Pfam" id="PF02615">
    <property type="entry name" value="Ldh_2"/>
    <property type="match status" value="1"/>
</dbReference>
<dbReference type="SUPFAM" id="SSF89733">
    <property type="entry name" value="L-sulfolactate dehydrogenase-like"/>
    <property type="match status" value="1"/>
</dbReference>
<accession>B6I3E8</accession>
<evidence type="ECO:0000255" key="1">
    <source>
        <dbReference type="HAMAP-Rule" id="MF_00820"/>
    </source>
</evidence>
<comment type="function">
    <text evidence="1">Catalyzes the reduction of 2,3-diketo-L-gulonate in the presence of NADH, to form 3-keto-L-gulonate.</text>
</comment>
<comment type="catalytic activity">
    <reaction evidence="1">
        <text>3-dehydro-L-gulonate + NAD(+) = 2,3-dioxo-L-gulonate + NADH + H(+)</text>
        <dbReference type="Rhea" id="RHEA:21924"/>
        <dbReference type="ChEBI" id="CHEBI:15378"/>
        <dbReference type="ChEBI" id="CHEBI:57441"/>
        <dbReference type="ChEBI" id="CHEBI:57540"/>
        <dbReference type="ChEBI" id="CHEBI:57655"/>
        <dbReference type="ChEBI" id="CHEBI:57945"/>
        <dbReference type="EC" id="1.1.1.130"/>
    </reaction>
</comment>
<comment type="catalytic activity">
    <reaction evidence="1">
        <text>3-dehydro-L-gulonate + NADP(+) = 2,3-dioxo-L-gulonate + NADPH + H(+)</text>
        <dbReference type="Rhea" id="RHEA:21928"/>
        <dbReference type="ChEBI" id="CHEBI:15378"/>
        <dbReference type="ChEBI" id="CHEBI:57441"/>
        <dbReference type="ChEBI" id="CHEBI:57655"/>
        <dbReference type="ChEBI" id="CHEBI:57783"/>
        <dbReference type="ChEBI" id="CHEBI:58349"/>
        <dbReference type="EC" id="1.1.1.130"/>
    </reaction>
</comment>
<comment type="subunit">
    <text evidence="1">Homodimer.</text>
</comment>
<comment type="subcellular location">
    <subcellularLocation>
        <location evidence="1">Cytoplasm</location>
    </subcellularLocation>
</comment>
<comment type="similarity">
    <text evidence="1">Belongs to the LDH2/MDH2 oxidoreductase family. DlgD subfamily.</text>
</comment>
<reference key="1">
    <citation type="journal article" date="2008" name="DNA Res.">
        <title>Complete genome sequence and comparative analysis of the wild-type commensal Escherichia coli strain SE11 isolated from a healthy adult.</title>
        <authorList>
            <person name="Oshima K."/>
            <person name="Toh H."/>
            <person name="Ogura Y."/>
            <person name="Sasamoto H."/>
            <person name="Morita H."/>
            <person name="Park S.-H."/>
            <person name="Ooka T."/>
            <person name="Iyoda S."/>
            <person name="Taylor T.D."/>
            <person name="Hayashi T."/>
            <person name="Itoh K."/>
            <person name="Hattori M."/>
        </authorList>
    </citation>
    <scope>NUCLEOTIDE SEQUENCE [LARGE SCALE GENOMIC DNA]</scope>
    <source>
        <strain>SE11</strain>
    </source>
</reference>
<protein>
    <recommendedName>
        <fullName evidence="1">2,3-diketo-L-gulonate reductase</fullName>
        <shortName evidence="1">2,3-DKG reductase</shortName>
        <ecNumber evidence="1">1.1.1.130</ecNumber>
    </recommendedName>
    <alternativeName>
        <fullName evidence="1">3-dehydro-L-gulonate 2-dehydrogenase</fullName>
    </alternativeName>
</protein>
<name>DLGD_ECOSE</name>
<proteinExistence type="inferred from homology"/>
<keyword id="KW-0963">Cytoplasm</keyword>
<keyword id="KW-0520">NAD</keyword>
<keyword id="KW-0560">Oxidoreductase</keyword>
<feature type="chain" id="PRO_1000134342" description="2,3-diketo-L-gulonate reductase">
    <location>
        <begin position="1"/>
        <end position="332"/>
    </location>
</feature>
<feature type="active site" description="Proton donor" evidence="1">
    <location>
        <position position="44"/>
    </location>
</feature>
<feature type="binding site" evidence="1">
    <location>
        <begin position="168"/>
        <end position="174"/>
    </location>
    <ligand>
        <name>NAD(+)</name>
        <dbReference type="ChEBI" id="CHEBI:57540"/>
    </ligand>
</feature>
<feature type="binding site" evidence="1">
    <location>
        <begin position="224"/>
        <end position="225"/>
    </location>
    <ligand>
        <name>NAD(+)</name>
        <dbReference type="ChEBI" id="CHEBI:57540"/>
    </ligand>
</feature>
<feature type="binding site" evidence="1">
    <location>
        <begin position="304"/>
        <end position="306"/>
    </location>
    <ligand>
        <name>NAD(+)</name>
        <dbReference type="ChEBI" id="CHEBI:57540"/>
    </ligand>
</feature>
<organism>
    <name type="scientific">Escherichia coli (strain SE11)</name>
    <dbReference type="NCBI Taxonomy" id="409438"/>
    <lineage>
        <taxon>Bacteria</taxon>
        <taxon>Pseudomonadati</taxon>
        <taxon>Pseudomonadota</taxon>
        <taxon>Gammaproteobacteria</taxon>
        <taxon>Enterobacterales</taxon>
        <taxon>Enterobacteriaceae</taxon>
        <taxon>Escherichia</taxon>
    </lineage>
</organism>
<sequence>MKVTFEQLKAAFNRVLISRGVDSETADACAEMFARTTESGVYSHGVNRFPRFIQQLENGDIIPDAQPKRITSLGAIEQWDAQRSIGNLTAKKMMDRAIELAADHGIGLVALRNANHWMRGGSYGWQAAEKGYIGICWTNSIAVMPPWGAKECRIGTNPLIVAIPSTPITMVDMSMSMFSYGMLEVNRLAGRQLPVDGGFDDEGNLTKEPGVIEKNRRILPMGYWKGSGMSIVLDMIATLLSDGASVAEVTQDNSDEYGISQIFIAIEVDKLIDGPTRDAKLQRIMDYVTTAERADENQAIRLPGHEFTTLLAENRRNGITVDDSVWAKIQAL</sequence>